<organism>
    <name type="scientific">Christiangramia forsetii (strain DSM 17595 / CGMCC 1.15422 / KT0803)</name>
    <name type="common">Gramella forsetii</name>
    <dbReference type="NCBI Taxonomy" id="411154"/>
    <lineage>
        <taxon>Bacteria</taxon>
        <taxon>Pseudomonadati</taxon>
        <taxon>Bacteroidota</taxon>
        <taxon>Flavobacteriia</taxon>
        <taxon>Flavobacteriales</taxon>
        <taxon>Flavobacteriaceae</taxon>
        <taxon>Christiangramia</taxon>
    </lineage>
</organism>
<comment type="function">
    <text evidence="1">This protein binds to the 23S rRNA, and is important in its secondary structure. It is located near the subunit interface in the base of the L7/L12 stalk, and near the tRNA binding site of the peptidyltransferase center.</text>
</comment>
<comment type="subunit">
    <text evidence="1">Part of the 50S ribosomal subunit.</text>
</comment>
<comment type="similarity">
    <text evidence="1">Belongs to the universal ribosomal protein uL6 family.</text>
</comment>
<sequence>MSRIGKSPVTIPEGVTVDHKDGVVTVKGKLGELKQEIRDIDVKIEDNVITFERSSEKSDQKAKHGLYRALVNNMIEGVTNGYTKSLELVGVGYRATNQGNKLDLAVGYSHNIVLDLAPEVKVETISEKGKNPIVKVTSHDKQLVGQVAAKIRSFRAPEPYKGKGIKFVGEQLRRKAGKSA</sequence>
<name>RL6_CHRFK</name>
<keyword id="KW-0687">Ribonucleoprotein</keyword>
<keyword id="KW-0689">Ribosomal protein</keyword>
<keyword id="KW-0694">RNA-binding</keyword>
<keyword id="KW-0699">rRNA-binding</keyword>
<reference key="1">
    <citation type="journal article" date="2006" name="Environ. Microbiol.">
        <title>Whole genome analysis of the marine Bacteroidetes'Gramella forsetii' reveals adaptations to degradation of polymeric organic matter.</title>
        <authorList>
            <person name="Bauer M."/>
            <person name="Kube M."/>
            <person name="Teeling H."/>
            <person name="Richter M."/>
            <person name="Lombardot T."/>
            <person name="Allers E."/>
            <person name="Wuerdemann C.A."/>
            <person name="Quast C."/>
            <person name="Kuhl H."/>
            <person name="Knaust F."/>
            <person name="Woebken D."/>
            <person name="Bischof K."/>
            <person name="Mussmann M."/>
            <person name="Choudhuri J.V."/>
            <person name="Meyer F."/>
            <person name="Reinhardt R."/>
            <person name="Amann R.I."/>
            <person name="Gloeckner F.O."/>
        </authorList>
    </citation>
    <scope>NUCLEOTIDE SEQUENCE [LARGE SCALE GENOMIC DNA]</scope>
    <source>
        <strain>DSM 17595 / CGMCC 1.15422 / KT0803</strain>
    </source>
</reference>
<gene>
    <name evidence="1" type="primary">rplF</name>
    <name type="ordered locus">GFO_2824</name>
</gene>
<proteinExistence type="inferred from homology"/>
<accession>A0M583</accession>
<dbReference type="EMBL" id="CU207366">
    <property type="protein sequence ID" value="CAL67778.1"/>
    <property type="molecule type" value="Genomic_DNA"/>
</dbReference>
<dbReference type="RefSeq" id="WP_011710681.1">
    <property type="nucleotide sequence ID" value="NC_008571.1"/>
</dbReference>
<dbReference type="SMR" id="A0M583"/>
<dbReference type="STRING" id="411154.GFO_2824"/>
<dbReference type="KEGG" id="gfo:GFO_2824"/>
<dbReference type="eggNOG" id="COG0097">
    <property type="taxonomic scope" value="Bacteria"/>
</dbReference>
<dbReference type="HOGENOM" id="CLU_065464_1_2_10"/>
<dbReference type="OrthoDB" id="9805007at2"/>
<dbReference type="Proteomes" id="UP000000755">
    <property type="component" value="Chromosome"/>
</dbReference>
<dbReference type="GO" id="GO:0022625">
    <property type="term" value="C:cytosolic large ribosomal subunit"/>
    <property type="evidence" value="ECO:0007669"/>
    <property type="project" value="TreeGrafter"/>
</dbReference>
<dbReference type="GO" id="GO:0019843">
    <property type="term" value="F:rRNA binding"/>
    <property type="evidence" value="ECO:0007669"/>
    <property type="project" value="UniProtKB-UniRule"/>
</dbReference>
<dbReference type="GO" id="GO:0003735">
    <property type="term" value="F:structural constituent of ribosome"/>
    <property type="evidence" value="ECO:0007669"/>
    <property type="project" value="InterPro"/>
</dbReference>
<dbReference type="GO" id="GO:0002181">
    <property type="term" value="P:cytoplasmic translation"/>
    <property type="evidence" value="ECO:0007669"/>
    <property type="project" value="TreeGrafter"/>
</dbReference>
<dbReference type="FunFam" id="3.90.930.12:FF:000002">
    <property type="entry name" value="50S ribosomal protein L6"/>
    <property type="match status" value="1"/>
</dbReference>
<dbReference type="Gene3D" id="3.90.930.12">
    <property type="entry name" value="Ribosomal protein L6, alpha-beta domain"/>
    <property type="match status" value="2"/>
</dbReference>
<dbReference type="HAMAP" id="MF_01365_B">
    <property type="entry name" value="Ribosomal_uL6_B"/>
    <property type="match status" value="1"/>
</dbReference>
<dbReference type="InterPro" id="IPR000702">
    <property type="entry name" value="Ribosomal_uL6-like"/>
</dbReference>
<dbReference type="InterPro" id="IPR036789">
    <property type="entry name" value="Ribosomal_uL6-like_a/b-dom_sf"/>
</dbReference>
<dbReference type="InterPro" id="IPR020040">
    <property type="entry name" value="Ribosomal_uL6_a/b-dom"/>
</dbReference>
<dbReference type="InterPro" id="IPR019906">
    <property type="entry name" value="Ribosomal_uL6_bac-type"/>
</dbReference>
<dbReference type="InterPro" id="IPR002358">
    <property type="entry name" value="Ribosomal_uL6_CS"/>
</dbReference>
<dbReference type="NCBIfam" id="TIGR03654">
    <property type="entry name" value="L6_bact"/>
    <property type="match status" value="1"/>
</dbReference>
<dbReference type="PANTHER" id="PTHR11655">
    <property type="entry name" value="60S/50S RIBOSOMAL PROTEIN L6/L9"/>
    <property type="match status" value="1"/>
</dbReference>
<dbReference type="PANTHER" id="PTHR11655:SF14">
    <property type="entry name" value="LARGE RIBOSOMAL SUBUNIT PROTEIN UL6M"/>
    <property type="match status" value="1"/>
</dbReference>
<dbReference type="Pfam" id="PF00347">
    <property type="entry name" value="Ribosomal_L6"/>
    <property type="match status" value="2"/>
</dbReference>
<dbReference type="PIRSF" id="PIRSF002162">
    <property type="entry name" value="Ribosomal_L6"/>
    <property type="match status" value="1"/>
</dbReference>
<dbReference type="PRINTS" id="PR00059">
    <property type="entry name" value="RIBOSOMALL6"/>
</dbReference>
<dbReference type="SUPFAM" id="SSF56053">
    <property type="entry name" value="Ribosomal protein L6"/>
    <property type="match status" value="2"/>
</dbReference>
<dbReference type="PROSITE" id="PS00525">
    <property type="entry name" value="RIBOSOMAL_L6_1"/>
    <property type="match status" value="1"/>
</dbReference>
<protein>
    <recommendedName>
        <fullName evidence="1">Large ribosomal subunit protein uL6</fullName>
    </recommendedName>
    <alternativeName>
        <fullName evidence="2">50S ribosomal protein L6</fullName>
    </alternativeName>
</protein>
<feature type="chain" id="PRO_1000055235" description="Large ribosomal subunit protein uL6">
    <location>
        <begin position="1"/>
        <end position="180"/>
    </location>
</feature>
<evidence type="ECO:0000255" key="1">
    <source>
        <dbReference type="HAMAP-Rule" id="MF_01365"/>
    </source>
</evidence>
<evidence type="ECO:0000305" key="2"/>